<accession>P28247</accession>
<dbReference type="EMBL" id="X63703">
    <property type="protein sequence ID" value="CAA45231.1"/>
    <property type="molecule type" value="Genomic_DNA"/>
</dbReference>
<dbReference type="EMBL" id="U00008">
    <property type="protein sequence ID" value="AAA16407.1"/>
    <property type="molecule type" value="Genomic_DNA"/>
</dbReference>
<dbReference type="PIR" id="S24805">
    <property type="entry name" value="S24805"/>
</dbReference>
<evidence type="ECO:0000305" key="1"/>
<reference key="1">
    <citation type="journal article" date="1993" name="Gene">
        <title>Cloning and sequence analysis of an Escherichia coli gene conferring bicyclomycin resistance.</title>
        <authorList>
            <person name="Bentley J."/>
            <person name="Hyatt L.S."/>
            <person name="Ainley K."/>
            <person name="Parish J.H."/>
            <person name="Herbert R.B."/>
            <person name="White G.R."/>
        </authorList>
    </citation>
    <scope>NUCLEOTIDE SEQUENCE [GENOMIC DNA]</scope>
    <source>
        <strain>K12 / C600 / CR34 / ATCC 23724 / DSM 3925 / LMG 3041 / NCIB 10222</strain>
    </source>
</reference>
<reference key="2">
    <citation type="submission" date="1993-10" db="EMBL/GenBank/DDBJ databases">
        <title>Automated multiplex sequencing of the E.coli genome.</title>
        <authorList>
            <person name="Richterich P."/>
            <person name="Lakey N."/>
            <person name="Gryan G."/>
            <person name="Jaehn L."/>
            <person name="Mintz L."/>
            <person name="Robison K."/>
            <person name="Church G.M."/>
        </authorList>
    </citation>
    <scope>NUCLEOTIDE SEQUENCE [LARGE SCALE GENOMIC DNA]</scope>
    <source>
        <strain>K12 / BHB2600</strain>
    </source>
</reference>
<sequence length="167" mass="19153">MMARRSNAVRPLTIISHQHQTGGINIQPPRRMQFPRYRFIKKIEHRWVIRVVRGANIALRLIEHEVTWTVLLRQRVAIVSDIMFRKQFERCITDDFAIDGDTIAADFTPGNSTANAELLCDKFIKSHVCDFACKNGGRALTRKSELLSAQYSGLITSLKGKRSMAYY</sequence>
<proteinExistence type="uncertain"/>
<gene>
    <name type="primary">bicB</name>
</gene>
<comment type="caution">
    <text evidence="1">Could be the product of a pseudogene.</text>
</comment>
<name>BICB_ECOLI</name>
<feature type="chain" id="PRO_0000169836" description="Putative uncharacterized protein BicB">
    <location>
        <begin position="1"/>
        <end position="167"/>
    </location>
</feature>
<feature type="sequence conflict" description="In Ref. 1; CAA45231." evidence="1" ref="1">
    <original>QR</original>
    <variation>HG</variation>
    <location>
        <begin position="74"/>
        <end position="75"/>
    </location>
</feature>
<feature type="sequence conflict" description="In Ref. 1; CAA45231." evidence="1" ref="1">
    <original>ALTRKSELLSAQYSGLITSLKGKRSMAYY</original>
    <variation>GIDTKI</variation>
    <location>
        <begin position="139"/>
        <end position="167"/>
    </location>
</feature>
<protein>
    <recommendedName>
        <fullName>Putative uncharacterized protein BicB</fullName>
    </recommendedName>
</protein>
<organism>
    <name type="scientific">Escherichia coli (strain K12)</name>
    <dbReference type="NCBI Taxonomy" id="83333"/>
    <lineage>
        <taxon>Bacteria</taxon>
        <taxon>Pseudomonadati</taxon>
        <taxon>Pseudomonadota</taxon>
        <taxon>Gammaproteobacteria</taxon>
        <taxon>Enterobacterales</taxon>
        <taxon>Enterobacteriaceae</taxon>
        <taxon>Escherichia</taxon>
    </lineage>
</organism>